<keyword id="KW-0002">3D-structure</keyword>
<keyword id="KW-1185">Reference proteome</keyword>
<keyword id="KW-0687">Ribonucleoprotein</keyword>
<keyword id="KW-0689">Ribosomal protein</keyword>
<keyword id="KW-0694">RNA-binding</keyword>
<keyword id="KW-0699">rRNA-binding</keyword>
<keyword id="KW-0820">tRNA-binding</keyword>
<dbReference type="EMBL" id="U00089">
    <property type="protein sequence ID" value="AAB96307.1"/>
    <property type="molecule type" value="Genomic_DNA"/>
</dbReference>
<dbReference type="EMBL" id="X67651">
    <property type="protein sequence ID" value="CAA47893.1"/>
    <property type="molecule type" value="Genomic_DNA"/>
</dbReference>
<dbReference type="EMBL" id="U34795">
    <property type="protein sequence ID" value="AAC43709.1"/>
    <property type="molecule type" value="Genomic_DNA"/>
</dbReference>
<dbReference type="PIR" id="S73985">
    <property type="entry name" value="S73985"/>
</dbReference>
<dbReference type="RefSeq" id="NP_109860.1">
    <property type="nucleotide sequence ID" value="NC_000912.1"/>
</dbReference>
<dbReference type="RefSeq" id="WP_010874529.1">
    <property type="nucleotide sequence ID" value="NZ_OU342337.1"/>
</dbReference>
<dbReference type="PDB" id="7OOD">
    <property type="method" value="EM"/>
    <property type="resolution" value="3.40 A"/>
    <property type="chains" value="l=1-139"/>
</dbReference>
<dbReference type="PDB" id="7P6Z">
    <property type="method" value="EM"/>
    <property type="resolution" value="3.50 A"/>
    <property type="chains" value="l=1-139"/>
</dbReference>
<dbReference type="PDB" id="7PAH">
    <property type="method" value="EM"/>
    <property type="resolution" value="9.50 A"/>
    <property type="chains" value="l=1-139"/>
</dbReference>
<dbReference type="PDB" id="7PAI">
    <property type="method" value="EM"/>
    <property type="resolution" value="6.70 A"/>
    <property type="chains" value="l=1-139"/>
</dbReference>
<dbReference type="PDB" id="7PAJ">
    <property type="method" value="EM"/>
    <property type="resolution" value="7.30 A"/>
    <property type="chains" value="l=1-139"/>
</dbReference>
<dbReference type="PDB" id="7PAK">
    <property type="method" value="EM"/>
    <property type="resolution" value="5.30 A"/>
    <property type="chains" value="l=1-139"/>
</dbReference>
<dbReference type="PDB" id="7PAL">
    <property type="method" value="EM"/>
    <property type="resolution" value="4.70 A"/>
    <property type="chains" value="l=1-139"/>
</dbReference>
<dbReference type="PDB" id="7PAM">
    <property type="method" value="EM"/>
    <property type="resolution" value="6.80 A"/>
    <property type="chains" value="l=1-139"/>
</dbReference>
<dbReference type="PDB" id="7PAN">
    <property type="method" value="EM"/>
    <property type="resolution" value="9.70 A"/>
    <property type="chains" value="l=1-139"/>
</dbReference>
<dbReference type="PDB" id="7PAO">
    <property type="method" value="EM"/>
    <property type="resolution" value="7.00 A"/>
    <property type="chains" value="l=1-139"/>
</dbReference>
<dbReference type="PDB" id="7PAQ">
    <property type="method" value="EM"/>
    <property type="resolution" value="8.90 A"/>
    <property type="chains" value="l=1-139"/>
</dbReference>
<dbReference type="PDB" id="7PAR">
    <property type="method" value="EM"/>
    <property type="resolution" value="8.20 A"/>
    <property type="chains" value="l=1-139"/>
</dbReference>
<dbReference type="PDB" id="7PAS">
    <property type="method" value="EM"/>
    <property type="resolution" value="16.00 A"/>
    <property type="chains" value="l=1-139"/>
</dbReference>
<dbReference type="PDB" id="7PAT">
    <property type="method" value="EM"/>
    <property type="resolution" value="9.20 A"/>
    <property type="chains" value="l=1-139"/>
</dbReference>
<dbReference type="PDB" id="7PAU">
    <property type="method" value="EM"/>
    <property type="resolution" value="8.30 A"/>
    <property type="chains" value="l=1-139"/>
</dbReference>
<dbReference type="PDB" id="7PH9">
    <property type="method" value="EM"/>
    <property type="resolution" value="8.70 A"/>
    <property type="chains" value="l=1-139"/>
</dbReference>
<dbReference type="PDB" id="7PHA">
    <property type="method" value="EM"/>
    <property type="resolution" value="8.50 A"/>
    <property type="chains" value="l=1-139"/>
</dbReference>
<dbReference type="PDB" id="7PHB">
    <property type="method" value="EM"/>
    <property type="resolution" value="4.90 A"/>
    <property type="chains" value="l=1-139"/>
</dbReference>
<dbReference type="PDB" id="7PHC">
    <property type="method" value="EM"/>
    <property type="resolution" value="9.90 A"/>
    <property type="chains" value="l=1-139"/>
</dbReference>
<dbReference type="PDB" id="7PI8">
    <property type="method" value="EM"/>
    <property type="resolution" value="8.90 A"/>
    <property type="chains" value="l=1-139"/>
</dbReference>
<dbReference type="PDB" id="7PI9">
    <property type="method" value="EM"/>
    <property type="resolution" value="6.30 A"/>
    <property type="chains" value="l=1-139"/>
</dbReference>
<dbReference type="PDB" id="7PIA">
    <property type="method" value="EM"/>
    <property type="resolution" value="13.60 A"/>
    <property type="chains" value="l=1-139"/>
</dbReference>
<dbReference type="PDB" id="7PIB">
    <property type="method" value="EM"/>
    <property type="resolution" value="4.70 A"/>
    <property type="chains" value="l=1-139"/>
</dbReference>
<dbReference type="PDB" id="7PIC">
    <property type="method" value="EM"/>
    <property type="resolution" value="9.10 A"/>
    <property type="chains" value="l=1-139"/>
</dbReference>
<dbReference type="PDB" id="7PIO">
    <property type="method" value="EM"/>
    <property type="resolution" value="9.50 A"/>
    <property type="chains" value="l=1-139"/>
</dbReference>
<dbReference type="PDB" id="7PIP">
    <property type="method" value="EM"/>
    <property type="resolution" value="9.30 A"/>
    <property type="chains" value="l=1-139"/>
</dbReference>
<dbReference type="PDB" id="7PIQ">
    <property type="method" value="EM"/>
    <property type="resolution" value="9.70 A"/>
    <property type="chains" value="l=1-139"/>
</dbReference>
<dbReference type="PDB" id="7PIR">
    <property type="method" value="EM"/>
    <property type="resolution" value="12.10 A"/>
    <property type="chains" value="l=1-139"/>
</dbReference>
<dbReference type="PDB" id="7PIS">
    <property type="method" value="EM"/>
    <property type="resolution" value="15.00 A"/>
    <property type="chains" value="l=1-139"/>
</dbReference>
<dbReference type="PDB" id="7PIT">
    <property type="method" value="EM"/>
    <property type="resolution" value="5.70 A"/>
    <property type="chains" value="l=1-139"/>
</dbReference>
<dbReference type="PDB" id="8P7X">
    <property type="method" value="EM"/>
    <property type="resolution" value="3.03 A"/>
    <property type="chains" value="l=1-139"/>
</dbReference>
<dbReference type="PDB" id="8P7Y">
    <property type="method" value="EM"/>
    <property type="resolution" value="3.70 A"/>
    <property type="chains" value="l=1-139"/>
</dbReference>
<dbReference type="PDB" id="8P8B">
    <property type="method" value="EM"/>
    <property type="resolution" value="2.90 A"/>
    <property type="chains" value="l=1-139"/>
</dbReference>
<dbReference type="PDB" id="8P8V">
    <property type="method" value="EM"/>
    <property type="resolution" value="8.70 A"/>
    <property type="chains" value="l=1-139"/>
</dbReference>
<dbReference type="PDB" id="8P8W">
    <property type="method" value="EM"/>
    <property type="resolution" value="8.70 A"/>
    <property type="chains" value="l=1-139"/>
</dbReference>
<dbReference type="PDBsum" id="7OOD"/>
<dbReference type="PDBsum" id="7P6Z"/>
<dbReference type="PDBsum" id="7PAH"/>
<dbReference type="PDBsum" id="7PAI"/>
<dbReference type="PDBsum" id="7PAJ"/>
<dbReference type="PDBsum" id="7PAK"/>
<dbReference type="PDBsum" id="7PAL"/>
<dbReference type="PDBsum" id="7PAM"/>
<dbReference type="PDBsum" id="7PAN"/>
<dbReference type="PDBsum" id="7PAO"/>
<dbReference type="PDBsum" id="7PAQ"/>
<dbReference type="PDBsum" id="7PAR"/>
<dbReference type="PDBsum" id="7PAS"/>
<dbReference type="PDBsum" id="7PAT"/>
<dbReference type="PDBsum" id="7PAU"/>
<dbReference type="PDBsum" id="7PH9"/>
<dbReference type="PDBsum" id="7PHA"/>
<dbReference type="PDBsum" id="7PHB"/>
<dbReference type="PDBsum" id="7PHC"/>
<dbReference type="PDBsum" id="7PI8"/>
<dbReference type="PDBsum" id="7PI9"/>
<dbReference type="PDBsum" id="7PIA"/>
<dbReference type="PDBsum" id="7PIB"/>
<dbReference type="PDBsum" id="7PIC"/>
<dbReference type="PDBsum" id="7PIO"/>
<dbReference type="PDBsum" id="7PIP"/>
<dbReference type="PDBsum" id="7PIQ"/>
<dbReference type="PDBsum" id="7PIR"/>
<dbReference type="PDBsum" id="7PIS"/>
<dbReference type="PDBsum" id="7PIT"/>
<dbReference type="PDBsum" id="8P7X"/>
<dbReference type="PDBsum" id="8P7Y"/>
<dbReference type="PDBsum" id="8P8B"/>
<dbReference type="PDBsum" id="8P8V"/>
<dbReference type="PDBsum" id="8P8W"/>
<dbReference type="EMDB" id="EMD-13234"/>
<dbReference type="EMDB" id="EMD-13272"/>
<dbReference type="EMDB" id="EMD-13273"/>
<dbReference type="EMDB" id="EMD-13274"/>
<dbReference type="EMDB" id="EMD-13275"/>
<dbReference type="EMDB" id="EMD-13276"/>
<dbReference type="EMDB" id="EMD-13277"/>
<dbReference type="EMDB" id="EMD-13278"/>
<dbReference type="EMDB" id="EMD-13279"/>
<dbReference type="EMDB" id="EMD-13280"/>
<dbReference type="EMDB" id="EMD-13281"/>
<dbReference type="EMDB" id="EMD-13282"/>
<dbReference type="EMDB" id="EMD-13285"/>
<dbReference type="EMDB" id="EMD-13286"/>
<dbReference type="EMDB" id="EMD-13410"/>
<dbReference type="EMDB" id="EMD-13411"/>
<dbReference type="EMDB" id="EMD-13412"/>
<dbReference type="EMDB" id="EMD-13413"/>
<dbReference type="EMDB" id="EMD-13432"/>
<dbReference type="EMDB" id="EMD-13433"/>
<dbReference type="EMDB" id="EMD-13434"/>
<dbReference type="EMDB" id="EMD-13435"/>
<dbReference type="EMDB" id="EMD-13436"/>
<dbReference type="EMDB" id="EMD-13445"/>
<dbReference type="EMDB" id="EMD-13446"/>
<dbReference type="EMDB" id="EMD-13447"/>
<dbReference type="EMDB" id="EMD-13448"/>
<dbReference type="EMDB" id="EMD-13449"/>
<dbReference type="EMDB" id="EMD-13450"/>
<dbReference type="SMR" id="P41204"/>
<dbReference type="IntAct" id="P41204">
    <property type="interactions" value="5"/>
</dbReference>
<dbReference type="STRING" id="272634.MPN_172"/>
<dbReference type="EnsemblBacteria" id="AAB96307">
    <property type="protein sequence ID" value="AAB96307"/>
    <property type="gene ID" value="MPN_172"/>
</dbReference>
<dbReference type="GeneID" id="66609180"/>
<dbReference type="KEGG" id="mpn:MPN_172"/>
<dbReference type="PATRIC" id="fig|272634.6.peg.190"/>
<dbReference type="HOGENOM" id="CLU_078858_2_1_14"/>
<dbReference type="OrthoDB" id="9802589at2"/>
<dbReference type="BioCyc" id="MPNE272634:G1GJ3-282-MONOMER"/>
<dbReference type="Proteomes" id="UP000000808">
    <property type="component" value="Chromosome"/>
</dbReference>
<dbReference type="GO" id="GO:0022625">
    <property type="term" value="C:cytosolic large ribosomal subunit"/>
    <property type="evidence" value="ECO:0007669"/>
    <property type="project" value="TreeGrafter"/>
</dbReference>
<dbReference type="GO" id="GO:0019843">
    <property type="term" value="F:rRNA binding"/>
    <property type="evidence" value="ECO:0007669"/>
    <property type="project" value="UniProtKB-UniRule"/>
</dbReference>
<dbReference type="GO" id="GO:0003735">
    <property type="term" value="F:structural constituent of ribosome"/>
    <property type="evidence" value="ECO:0007669"/>
    <property type="project" value="InterPro"/>
</dbReference>
<dbReference type="GO" id="GO:0000049">
    <property type="term" value="F:tRNA binding"/>
    <property type="evidence" value="ECO:0007669"/>
    <property type="project" value="UniProtKB-KW"/>
</dbReference>
<dbReference type="GO" id="GO:0006412">
    <property type="term" value="P:translation"/>
    <property type="evidence" value="ECO:0007669"/>
    <property type="project" value="UniProtKB-UniRule"/>
</dbReference>
<dbReference type="CDD" id="cd01433">
    <property type="entry name" value="Ribosomal_L16_L10e"/>
    <property type="match status" value="1"/>
</dbReference>
<dbReference type="FunFam" id="3.90.1170.10:FF:000001">
    <property type="entry name" value="50S ribosomal protein L16"/>
    <property type="match status" value="1"/>
</dbReference>
<dbReference type="Gene3D" id="3.90.1170.10">
    <property type="entry name" value="Ribosomal protein L10e/L16"/>
    <property type="match status" value="1"/>
</dbReference>
<dbReference type="HAMAP" id="MF_01342">
    <property type="entry name" value="Ribosomal_uL16"/>
    <property type="match status" value="1"/>
</dbReference>
<dbReference type="InterPro" id="IPR047873">
    <property type="entry name" value="Ribosomal_uL16"/>
</dbReference>
<dbReference type="InterPro" id="IPR000114">
    <property type="entry name" value="Ribosomal_uL16_bact-type"/>
</dbReference>
<dbReference type="InterPro" id="IPR020798">
    <property type="entry name" value="Ribosomal_uL16_CS"/>
</dbReference>
<dbReference type="InterPro" id="IPR016180">
    <property type="entry name" value="Ribosomal_uL16_dom"/>
</dbReference>
<dbReference type="InterPro" id="IPR036920">
    <property type="entry name" value="Ribosomal_uL16_sf"/>
</dbReference>
<dbReference type="NCBIfam" id="TIGR01164">
    <property type="entry name" value="rplP_bact"/>
    <property type="match status" value="1"/>
</dbReference>
<dbReference type="PANTHER" id="PTHR12220">
    <property type="entry name" value="50S/60S RIBOSOMAL PROTEIN L16"/>
    <property type="match status" value="1"/>
</dbReference>
<dbReference type="PANTHER" id="PTHR12220:SF13">
    <property type="entry name" value="LARGE RIBOSOMAL SUBUNIT PROTEIN UL16M"/>
    <property type="match status" value="1"/>
</dbReference>
<dbReference type="Pfam" id="PF00252">
    <property type="entry name" value="Ribosomal_L16"/>
    <property type="match status" value="1"/>
</dbReference>
<dbReference type="PRINTS" id="PR00060">
    <property type="entry name" value="RIBOSOMALL16"/>
</dbReference>
<dbReference type="SUPFAM" id="SSF54686">
    <property type="entry name" value="Ribosomal protein L16p/L10e"/>
    <property type="match status" value="1"/>
</dbReference>
<dbReference type="PROSITE" id="PS00586">
    <property type="entry name" value="RIBOSOMAL_L16_1"/>
    <property type="match status" value="1"/>
</dbReference>
<dbReference type="PROSITE" id="PS00701">
    <property type="entry name" value="RIBOSOMAL_L16_2"/>
    <property type="match status" value="1"/>
</dbReference>
<organism>
    <name type="scientific">Mycoplasma pneumoniae (strain ATCC 29342 / M129 / Subtype 1)</name>
    <name type="common">Mycoplasmoides pneumoniae</name>
    <dbReference type="NCBI Taxonomy" id="272634"/>
    <lineage>
        <taxon>Bacteria</taxon>
        <taxon>Bacillati</taxon>
        <taxon>Mycoplasmatota</taxon>
        <taxon>Mycoplasmoidales</taxon>
        <taxon>Mycoplasmoidaceae</taxon>
        <taxon>Mycoplasmoides</taxon>
    </lineage>
</organism>
<evidence type="ECO:0000255" key="1">
    <source>
        <dbReference type="HAMAP-Rule" id="MF_01342"/>
    </source>
</evidence>
<evidence type="ECO:0000305" key="2"/>
<evidence type="ECO:0007829" key="3">
    <source>
        <dbReference type="PDB" id="7OOD"/>
    </source>
</evidence>
<evidence type="ECO:0007829" key="4">
    <source>
        <dbReference type="PDB" id="8P8B"/>
    </source>
</evidence>
<protein>
    <recommendedName>
        <fullName evidence="1">Large ribosomal subunit protein uL16</fullName>
    </recommendedName>
    <alternativeName>
        <fullName evidence="2">50S ribosomal protein L16</fullName>
    </alternativeName>
</protein>
<gene>
    <name evidence="1" type="primary">rplP</name>
    <name type="ordered locus">MPN_172</name>
    <name type="ORF">MP659</name>
</gene>
<sequence>MLQPKRTKYRKPHNVSYEGKAKGNSYVAFGEYGLVATKGNWIDARAIESARIAISKCLGKTGKMWIRIFPHMSKTKKPLEVRMGSGKGNPEFWVAVVKQGTVMFEVANIPESQMIKALTRAGHKLPVTWKILKREEVSA</sequence>
<accession>P41204</accession>
<accession>P75573</accession>
<accession>Q50311</accession>
<name>RL16_MYCPN</name>
<feature type="chain" id="PRO_0000062148" description="Large ribosomal subunit protein uL16">
    <location>
        <begin position="1"/>
        <end position="139"/>
    </location>
</feature>
<feature type="strand" evidence="4">
    <location>
        <begin position="29"/>
        <end position="38"/>
    </location>
</feature>
<feature type="strand" evidence="4">
    <location>
        <begin position="40"/>
        <end position="43"/>
    </location>
</feature>
<feature type="helix" evidence="4">
    <location>
        <begin position="44"/>
        <end position="57"/>
    </location>
</feature>
<feature type="turn" evidence="3">
    <location>
        <begin position="59"/>
        <end position="61"/>
    </location>
</feature>
<feature type="strand" evidence="4">
    <location>
        <begin position="63"/>
        <end position="66"/>
    </location>
</feature>
<feature type="strand" evidence="4">
    <location>
        <begin position="72"/>
        <end position="76"/>
    </location>
</feature>
<feature type="strand" evidence="4">
    <location>
        <begin position="89"/>
        <end position="97"/>
    </location>
</feature>
<feature type="strand" evidence="4">
    <location>
        <begin position="102"/>
        <end position="109"/>
    </location>
</feature>
<feature type="helix" evidence="4">
    <location>
        <begin position="111"/>
        <end position="123"/>
    </location>
</feature>
<feature type="strand" evidence="4">
    <location>
        <begin position="125"/>
        <end position="127"/>
    </location>
</feature>
<feature type="strand" evidence="4">
    <location>
        <begin position="129"/>
        <end position="133"/>
    </location>
</feature>
<reference key="1">
    <citation type="journal article" date="1996" name="Nucleic Acids Res.">
        <title>Complete sequence analysis of the genome of the bacterium Mycoplasma pneumoniae.</title>
        <authorList>
            <person name="Himmelreich R."/>
            <person name="Hilbert H."/>
            <person name="Plagens H."/>
            <person name="Pirkl E."/>
            <person name="Li B.-C."/>
            <person name="Herrmann R."/>
        </authorList>
    </citation>
    <scope>NUCLEOTIDE SEQUENCE [LARGE SCALE GENOMIC DNA]</scope>
    <source>
        <strain>ATCC 29342 / M129 / Subtype 1</strain>
    </source>
</reference>
<reference key="2">
    <citation type="journal article" date="1992" name="J. Bacteriol.">
        <title>Construction of an EcoRI restriction map of Mycoplasma pneumoniae and localization of selected genes.</title>
        <authorList>
            <person name="Wenzel R."/>
            <person name="Pirkl E."/>
            <person name="Herrmann R."/>
        </authorList>
    </citation>
    <scope>NUCLEOTIDE SEQUENCE [GENOMIC DNA] OF 1-75</scope>
    <source>
        <strain>ATCC 29342 / M129 / Subtype 1</strain>
    </source>
</reference>
<reference key="3">
    <citation type="journal article" date="1996" name="Nucleic Acids Res.">
        <title>Sequence analysis of 56 kb from the genome of the bacterium Mycoplasma pneumoniae comprising the dnaA region, the atp operon and a cluster of ribosomal protein genes.</title>
        <authorList>
            <person name="Hilbert H."/>
            <person name="Himmelreich R."/>
            <person name="Plagens H."/>
            <person name="Herrmann R."/>
        </authorList>
    </citation>
    <scope>NUCLEOTIDE SEQUENCE [GENOMIC DNA] OF 91-139</scope>
    <source>
        <strain>ATCC 29342 / M129 / Subtype 1</strain>
    </source>
</reference>
<proteinExistence type="evidence at protein level"/>
<comment type="function">
    <text evidence="1">Binds 23S rRNA and is also seen to make contacts with the A and possibly P site tRNAs.</text>
</comment>
<comment type="subunit">
    <text evidence="1">Part of the 50S ribosomal subunit.</text>
</comment>
<comment type="similarity">
    <text evidence="1">Belongs to the universal ribosomal protein uL16 family.</text>
</comment>